<gene>
    <name type="primary">RPS24</name>
    <name type="ORF">QflA-14484</name>
</gene>
<dbReference type="EMBL" id="AB169568">
    <property type="protein sequence ID" value="BAE01650.1"/>
    <property type="molecule type" value="mRNA"/>
</dbReference>
<dbReference type="SMR" id="Q4R5H5"/>
<dbReference type="STRING" id="9541.ENSMFAP00000036805"/>
<dbReference type="eggNOG" id="KOG3424">
    <property type="taxonomic scope" value="Eukaryota"/>
</dbReference>
<dbReference type="Proteomes" id="UP000233100">
    <property type="component" value="Unplaced"/>
</dbReference>
<dbReference type="GO" id="GO:0005737">
    <property type="term" value="C:cytoplasm"/>
    <property type="evidence" value="ECO:0007669"/>
    <property type="project" value="UniProtKB-SubCell"/>
</dbReference>
<dbReference type="GO" id="GO:0005730">
    <property type="term" value="C:nucleolus"/>
    <property type="evidence" value="ECO:0007669"/>
    <property type="project" value="UniProtKB-SubCell"/>
</dbReference>
<dbReference type="GO" id="GO:0044391">
    <property type="term" value="C:ribosomal subunit"/>
    <property type="evidence" value="ECO:0007669"/>
    <property type="project" value="UniProtKB-ARBA"/>
</dbReference>
<dbReference type="GO" id="GO:0032040">
    <property type="term" value="C:small-subunit processome"/>
    <property type="evidence" value="ECO:0000250"/>
    <property type="project" value="UniProtKB"/>
</dbReference>
<dbReference type="GO" id="GO:0003735">
    <property type="term" value="F:structural constituent of ribosome"/>
    <property type="evidence" value="ECO:0007669"/>
    <property type="project" value="InterPro"/>
</dbReference>
<dbReference type="GO" id="GO:0042274">
    <property type="term" value="P:ribosomal small subunit biogenesis"/>
    <property type="evidence" value="ECO:0000250"/>
    <property type="project" value="UniProtKB"/>
</dbReference>
<dbReference type="GO" id="GO:0006412">
    <property type="term" value="P:translation"/>
    <property type="evidence" value="ECO:0007669"/>
    <property type="project" value="InterPro"/>
</dbReference>
<dbReference type="FunFam" id="3.30.70.3370:FF:000001">
    <property type="entry name" value="40S ribosomal protein S24"/>
    <property type="match status" value="1"/>
</dbReference>
<dbReference type="Gene3D" id="3.30.70.3370">
    <property type="match status" value="1"/>
</dbReference>
<dbReference type="HAMAP" id="MF_00545">
    <property type="entry name" value="Ribosomal_eS24"/>
    <property type="match status" value="1"/>
</dbReference>
<dbReference type="InterPro" id="IPR053709">
    <property type="entry name" value="eRP_eS24_sf"/>
</dbReference>
<dbReference type="InterPro" id="IPR001976">
    <property type="entry name" value="Ribosomal_eS24"/>
</dbReference>
<dbReference type="InterPro" id="IPR018098">
    <property type="entry name" value="Ribosomal_eS24_CS"/>
</dbReference>
<dbReference type="InterPro" id="IPR012678">
    <property type="entry name" value="Ribosomal_uL23/eL15/eS24_sf"/>
</dbReference>
<dbReference type="PANTHER" id="PTHR10496">
    <property type="entry name" value="40S RIBOSOMAL PROTEIN S24"/>
    <property type="match status" value="1"/>
</dbReference>
<dbReference type="Pfam" id="PF01282">
    <property type="entry name" value="Ribosomal_S24e"/>
    <property type="match status" value="1"/>
</dbReference>
<dbReference type="SUPFAM" id="SSF54189">
    <property type="entry name" value="Ribosomal proteins S24e, L23 and L15e"/>
    <property type="match status" value="1"/>
</dbReference>
<dbReference type="PROSITE" id="PS00529">
    <property type="entry name" value="RIBOSOMAL_S24E"/>
    <property type="match status" value="1"/>
</dbReference>
<keyword id="KW-0007">Acetylation</keyword>
<keyword id="KW-0963">Cytoplasm</keyword>
<keyword id="KW-1017">Isopeptide bond</keyword>
<keyword id="KW-0539">Nucleus</keyword>
<keyword id="KW-0597">Phosphoprotein</keyword>
<keyword id="KW-1185">Reference proteome</keyword>
<keyword id="KW-0687">Ribonucleoprotein</keyword>
<keyword id="KW-0689">Ribosomal protein</keyword>
<keyword id="KW-0832">Ubl conjugation</keyword>
<evidence type="ECO:0000250" key="1">
    <source>
        <dbReference type="UniProtKB" id="P62847"/>
    </source>
</evidence>
<evidence type="ECO:0000256" key="2">
    <source>
        <dbReference type="SAM" id="MobiDB-lite"/>
    </source>
</evidence>
<evidence type="ECO:0000305" key="3"/>
<accession>Q4R5H5</accession>
<protein>
    <recommendedName>
        <fullName evidence="3">Small ribosomal subunit protein eS24</fullName>
    </recommendedName>
    <alternativeName>
        <fullName>40S ribosomal protein S24</fullName>
    </alternativeName>
</protein>
<name>RS24_MACFA</name>
<sequence>MNDTVTIRTRKFMTNRLLQRKQMVIGVLHPGKATVPKTEIREKLAKMYKTTPDVIFVFGFRTHFGGGKTTGFGMIYDSLDYAKKNEPKHRLARHGLYEKKKTSRKQRKERKNRMKKVRGTAKANVGAGKKK</sequence>
<feature type="chain" id="PRO_0000231011" description="Small ribosomal subunit protein eS24">
    <location>
        <begin position="1"/>
        <end position="131"/>
    </location>
</feature>
<feature type="region of interest" description="Disordered" evidence="2">
    <location>
        <begin position="90"/>
        <end position="131"/>
    </location>
</feature>
<feature type="compositionally biased region" description="Basic and acidic residues" evidence="2">
    <location>
        <begin position="90"/>
        <end position="100"/>
    </location>
</feature>
<feature type="compositionally biased region" description="Basic residues" evidence="2">
    <location>
        <begin position="101"/>
        <end position="119"/>
    </location>
</feature>
<feature type="modified residue" description="N-acetylmethionine" evidence="1">
    <location>
        <position position="1"/>
    </location>
</feature>
<feature type="modified residue" description="Phosphothreonine" evidence="1">
    <location>
        <position position="9"/>
    </location>
</feature>
<feature type="cross-link" description="Glycyl lysine isopeptide (Lys-Gly) (interchain with G-Cter in SUMO2)" evidence="1">
    <location>
        <position position="37"/>
    </location>
</feature>
<organism>
    <name type="scientific">Macaca fascicularis</name>
    <name type="common">Crab-eating macaque</name>
    <name type="synonym">Cynomolgus monkey</name>
    <dbReference type="NCBI Taxonomy" id="9541"/>
    <lineage>
        <taxon>Eukaryota</taxon>
        <taxon>Metazoa</taxon>
        <taxon>Chordata</taxon>
        <taxon>Craniata</taxon>
        <taxon>Vertebrata</taxon>
        <taxon>Euteleostomi</taxon>
        <taxon>Mammalia</taxon>
        <taxon>Eutheria</taxon>
        <taxon>Euarchontoglires</taxon>
        <taxon>Primates</taxon>
        <taxon>Haplorrhini</taxon>
        <taxon>Catarrhini</taxon>
        <taxon>Cercopithecidae</taxon>
        <taxon>Cercopithecinae</taxon>
        <taxon>Macaca</taxon>
    </lineage>
</organism>
<comment type="function">
    <text evidence="1">Component of the small ribosomal subunit. The ribosome is a large ribonucleoprotein complex responsible for the synthesis of proteins in the cell. Required for processing of pre-rRNA and maturation of 40S ribosomal subunits. Part of the small subunit (SSU) processome, first precursor of the small eukaryotic ribosomal subunit. During the assembly of the SSU processome in the nucleolus, many ribosome biogenesis factors, an RNA chaperone and ribosomal proteins associate with the nascent pre-rRNA and work in concert to generate RNA folding, modifications, rearrangements and cleavage as well as targeted degradation of pre-ribosomal RNA by the RNA exosome.</text>
</comment>
<comment type="subunit">
    <text evidence="1">Component of the small ribosomal subunit. Part of the small subunit (SSU) processome, composed of more than 70 proteins and the RNA chaperone small nucleolar RNA (snoRNA) U3.</text>
</comment>
<comment type="subcellular location">
    <subcellularLocation>
        <location evidence="1">Cytoplasm</location>
    </subcellularLocation>
    <subcellularLocation>
        <location evidence="1">Nucleus</location>
        <location evidence="1">Nucleolus</location>
    </subcellularLocation>
</comment>
<comment type="similarity">
    <text evidence="3">Belongs to the eukaryotic ribosomal protein eS24 family.</text>
</comment>
<reference key="1">
    <citation type="submission" date="2005-06" db="EMBL/GenBank/DDBJ databases">
        <title>DNA sequences of macaque genes expressed in brain or testis and its evolutionary implications.</title>
        <authorList>
            <consortium name="International consortium for macaque cDNA sequencing and analysis"/>
        </authorList>
    </citation>
    <scope>NUCLEOTIDE SEQUENCE [LARGE SCALE MRNA]</scope>
    <source>
        <tissue>Frontal cortex</tissue>
    </source>
</reference>
<proteinExistence type="evidence at transcript level"/>